<proteinExistence type="inferred from homology"/>
<evidence type="ECO:0000250" key="1">
    <source>
        <dbReference type="UniProtKB" id="P31129"/>
    </source>
</evidence>
<evidence type="ECO:0000250" key="2">
    <source>
        <dbReference type="UniProtKB" id="P76330"/>
    </source>
</evidence>
<evidence type="ECO:0000255" key="3"/>
<evidence type="ECO:0000255" key="4">
    <source>
        <dbReference type="PROSITE-ProRule" id="PRU00095"/>
    </source>
</evidence>
<evidence type="ECO:0000305" key="5"/>
<gene>
    <name evidence="2" type="primary">dgcQ</name>
    <name type="synonym">yedQ</name>
    <name type="ordered locus">STY2194</name>
    <name type="ordered locus">t0891</name>
</gene>
<reference key="1">
    <citation type="journal article" date="2001" name="Nature">
        <title>Complete genome sequence of a multiple drug resistant Salmonella enterica serovar Typhi CT18.</title>
        <authorList>
            <person name="Parkhill J."/>
            <person name="Dougan G."/>
            <person name="James K.D."/>
            <person name="Thomson N.R."/>
            <person name="Pickard D."/>
            <person name="Wain J."/>
            <person name="Churcher C.M."/>
            <person name="Mungall K.L."/>
            <person name="Bentley S.D."/>
            <person name="Holden M.T.G."/>
            <person name="Sebaihia M."/>
            <person name="Baker S."/>
            <person name="Basham D."/>
            <person name="Brooks K."/>
            <person name="Chillingworth T."/>
            <person name="Connerton P."/>
            <person name="Cronin A."/>
            <person name="Davis P."/>
            <person name="Davies R.M."/>
            <person name="Dowd L."/>
            <person name="White N."/>
            <person name="Farrar J."/>
            <person name="Feltwell T."/>
            <person name="Hamlin N."/>
            <person name="Haque A."/>
            <person name="Hien T.T."/>
            <person name="Holroyd S."/>
            <person name="Jagels K."/>
            <person name="Krogh A."/>
            <person name="Larsen T.S."/>
            <person name="Leather S."/>
            <person name="Moule S."/>
            <person name="O'Gaora P."/>
            <person name="Parry C."/>
            <person name="Quail M.A."/>
            <person name="Rutherford K.M."/>
            <person name="Simmonds M."/>
            <person name="Skelton J."/>
            <person name="Stevens K."/>
            <person name="Whitehead S."/>
            <person name="Barrell B.G."/>
        </authorList>
    </citation>
    <scope>NUCLEOTIDE SEQUENCE [LARGE SCALE GENOMIC DNA]</scope>
    <source>
        <strain>CT18</strain>
    </source>
</reference>
<reference key="2">
    <citation type="journal article" date="2003" name="J. Bacteriol.">
        <title>Comparative genomics of Salmonella enterica serovar Typhi strains Ty2 and CT18.</title>
        <authorList>
            <person name="Deng W."/>
            <person name="Liou S.-R."/>
            <person name="Plunkett G. III"/>
            <person name="Mayhew G.F."/>
            <person name="Rose D.J."/>
            <person name="Burland V."/>
            <person name="Kodoyianni V."/>
            <person name="Schwartz D.C."/>
            <person name="Blattner F.R."/>
        </authorList>
    </citation>
    <scope>NUCLEOTIDE SEQUENCE [LARGE SCALE GENOMIC DNA]</scope>
    <source>
        <strain>ATCC 700931 / Ty2</strain>
    </source>
</reference>
<comment type="function">
    <text evidence="1 2">Catalyzes the synthesis of cyclic-di-GMP (c-di-GMP) via the condensation of 2 GTP molecules (By similarity). Cyclic-di-GMP is a second messenger which controls cell surface-associated traits in bacteria. Involved in the regulation of cellulose production (By similarity).</text>
</comment>
<comment type="catalytic activity">
    <reaction evidence="1">
        <text>2 GTP = 3',3'-c-di-GMP + 2 diphosphate</text>
        <dbReference type="Rhea" id="RHEA:24898"/>
        <dbReference type="ChEBI" id="CHEBI:33019"/>
        <dbReference type="ChEBI" id="CHEBI:37565"/>
        <dbReference type="ChEBI" id="CHEBI:58805"/>
        <dbReference type="EC" id="2.7.7.65"/>
    </reaction>
</comment>
<comment type="cofactor">
    <cofactor evidence="1">
        <name>Mg(2+)</name>
        <dbReference type="ChEBI" id="CHEBI:18420"/>
    </cofactor>
    <text evidence="1">Binds 1 Mg(2+) ion per monomer.</text>
</comment>
<comment type="pathway">
    <text evidence="2">Glycan metabolism; bacterial cellulose biosynthesis.</text>
</comment>
<comment type="pathway">
    <text evidence="2">Purine metabolism; 3',5'-cyclic di-GMP biosynthesis.</text>
</comment>
<comment type="subunit">
    <text evidence="1">Homodimer.</text>
</comment>
<comment type="subcellular location">
    <subcellularLocation>
        <location evidence="5">Cell inner membrane</location>
        <topology evidence="3">Multi-pass membrane protein</topology>
    </subcellularLocation>
</comment>
<name>DGCQ_SALTI</name>
<accession>Q8Z5R0</accession>
<organism>
    <name type="scientific">Salmonella typhi</name>
    <dbReference type="NCBI Taxonomy" id="90370"/>
    <lineage>
        <taxon>Bacteria</taxon>
        <taxon>Pseudomonadati</taxon>
        <taxon>Pseudomonadota</taxon>
        <taxon>Gammaproteobacteria</taxon>
        <taxon>Enterobacterales</taxon>
        <taxon>Enterobacteriaceae</taxon>
        <taxon>Salmonella</taxon>
    </lineage>
</organism>
<keyword id="KW-0997">Cell inner membrane</keyword>
<keyword id="KW-1003">Cell membrane</keyword>
<keyword id="KW-0135">Cellulose biosynthesis</keyword>
<keyword id="KW-0342">GTP-binding</keyword>
<keyword id="KW-0460">Magnesium</keyword>
<keyword id="KW-0472">Membrane</keyword>
<keyword id="KW-0479">Metal-binding</keyword>
<keyword id="KW-0547">Nucleotide-binding</keyword>
<keyword id="KW-0808">Transferase</keyword>
<keyword id="KW-0812">Transmembrane</keyword>
<keyword id="KW-1133">Transmembrane helix</keyword>
<dbReference type="EC" id="2.7.7.65" evidence="2"/>
<dbReference type="EMBL" id="AL513382">
    <property type="protein sequence ID" value="CAD05734.1"/>
    <property type="molecule type" value="Genomic_DNA"/>
</dbReference>
<dbReference type="EMBL" id="AE014613">
    <property type="protein sequence ID" value="AAO68569.1"/>
    <property type="molecule type" value="Genomic_DNA"/>
</dbReference>
<dbReference type="RefSeq" id="NP_456547.1">
    <property type="nucleotide sequence ID" value="NC_003198.1"/>
</dbReference>
<dbReference type="RefSeq" id="WP_001119838.1">
    <property type="nucleotide sequence ID" value="NZ_WSUR01000004.1"/>
</dbReference>
<dbReference type="SMR" id="Q8Z5R0"/>
<dbReference type="STRING" id="220341.gene:17586103"/>
<dbReference type="KEGG" id="stt:t0891"/>
<dbReference type="KEGG" id="sty:STY2194"/>
<dbReference type="PATRIC" id="fig|220341.7.peg.2210"/>
<dbReference type="eggNOG" id="COG3706">
    <property type="taxonomic scope" value="Bacteria"/>
</dbReference>
<dbReference type="HOGENOM" id="CLU_000445_11_23_6"/>
<dbReference type="OMA" id="QFNIDRM"/>
<dbReference type="OrthoDB" id="9813903at2"/>
<dbReference type="UniPathway" id="UPA00599"/>
<dbReference type="UniPathway" id="UPA00694"/>
<dbReference type="Proteomes" id="UP000000541">
    <property type="component" value="Chromosome"/>
</dbReference>
<dbReference type="Proteomes" id="UP000002670">
    <property type="component" value="Chromosome"/>
</dbReference>
<dbReference type="GO" id="GO:0005886">
    <property type="term" value="C:plasma membrane"/>
    <property type="evidence" value="ECO:0007669"/>
    <property type="project" value="UniProtKB-SubCell"/>
</dbReference>
<dbReference type="GO" id="GO:0052621">
    <property type="term" value="F:diguanylate cyclase activity"/>
    <property type="evidence" value="ECO:0007669"/>
    <property type="project" value="UniProtKB-EC"/>
</dbReference>
<dbReference type="GO" id="GO:0005525">
    <property type="term" value="F:GTP binding"/>
    <property type="evidence" value="ECO:0007669"/>
    <property type="project" value="UniProtKB-KW"/>
</dbReference>
<dbReference type="GO" id="GO:0046872">
    <property type="term" value="F:metal ion binding"/>
    <property type="evidence" value="ECO:0007669"/>
    <property type="project" value="UniProtKB-KW"/>
</dbReference>
<dbReference type="GO" id="GO:0043709">
    <property type="term" value="P:cell adhesion involved in single-species biofilm formation"/>
    <property type="evidence" value="ECO:0007669"/>
    <property type="project" value="TreeGrafter"/>
</dbReference>
<dbReference type="GO" id="GO:0030244">
    <property type="term" value="P:cellulose biosynthetic process"/>
    <property type="evidence" value="ECO:0007669"/>
    <property type="project" value="UniProtKB-KW"/>
</dbReference>
<dbReference type="GO" id="GO:1902201">
    <property type="term" value="P:negative regulation of bacterial-type flagellum-dependent cell motility"/>
    <property type="evidence" value="ECO:0007669"/>
    <property type="project" value="TreeGrafter"/>
</dbReference>
<dbReference type="CDD" id="cd01949">
    <property type="entry name" value="GGDEF"/>
    <property type="match status" value="1"/>
</dbReference>
<dbReference type="FunFam" id="3.30.70.270:FF:000001">
    <property type="entry name" value="Diguanylate cyclase domain protein"/>
    <property type="match status" value="1"/>
</dbReference>
<dbReference type="Gene3D" id="3.30.70.270">
    <property type="match status" value="1"/>
</dbReference>
<dbReference type="InterPro" id="IPR033416">
    <property type="entry name" value="CHASE7"/>
</dbReference>
<dbReference type="InterPro" id="IPR050469">
    <property type="entry name" value="Diguanylate_Cyclase"/>
</dbReference>
<dbReference type="InterPro" id="IPR000160">
    <property type="entry name" value="GGDEF_dom"/>
</dbReference>
<dbReference type="InterPro" id="IPR029787">
    <property type="entry name" value="Nucleotide_cyclase"/>
</dbReference>
<dbReference type="InterPro" id="IPR043128">
    <property type="entry name" value="Rev_trsase/Diguanyl_cyclase"/>
</dbReference>
<dbReference type="NCBIfam" id="TIGR00254">
    <property type="entry name" value="GGDEF"/>
    <property type="match status" value="1"/>
</dbReference>
<dbReference type="NCBIfam" id="NF011955">
    <property type="entry name" value="PRK15426.1"/>
    <property type="match status" value="1"/>
</dbReference>
<dbReference type="PANTHER" id="PTHR45138:SF16">
    <property type="entry name" value="DIGUANYLATE CYCLASE DGCQ-RELATED"/>
    <property type="match status" value="1"/>
</dbReference>
<dbReference type="PANTHER" id="PTHR45138">
    <property type="entry name" value="REGULATORY COMPONENTS OF SENSORY TRANSDUCTION SYSTEM"/>
    <property type="match status" value="1"/>
</dbReference>
<dbReference type="Pfam" id="PF17151">
    <property type="entry name" value="CHASE7"/>
    <property type="match status" value="1"/>
</dbReference>
<dbReference type="Pfam" id="PF00990">
    <property type="entry name" value="GGDEF"/>
    <property type="match status" value="1"/>
</dbReference>
<dbReference type="SMART" id="SM00267">
    <property type="entry name" value="GGDEF"/>
    <property type="match status" value="1"/>
</dbReference>
<dbReference type="SUPFAM" id="SSF55073">
    <property type="entry name" value="Nucleotide cyclase"/>
    <property type="match status" value="1"/>
</dbReference>
<dbReference type="PROSITE" id="PS50887">
    <property type="entry name" value="GGDEF"/>
    <property type="match status" value="1"/>
</dbReference>
<feature type="chain" id="PRO_0000169099" description="Probable diguanylate cyclase DgcQ">
    <location>
        <begin position="1"/>
        <end position="567"/>
    </location>
</feature>
<feature type="transmembrane region" description="Helical" evidence="3">
    <location>
        <begin position="20"/>
        <end position="40"/>
    </location>
</feature>
<feature type="transmembrane region" description="Helical" evidence="3">
    <location>
        <begin position="357"/>
        <end position="377"/>
    </location>
</feature>
<feature type="domain" description="GGDEF" evidence="4">
    <location>
        <begin position="425"/>
        <end position="560"/>
    </location>
</feature>
<feature type="active site" description="Proton acceptor" evidence="3">
    <location>
        <position position="476"/>
    </location>
</feature>
<feature type="binding site" evidence="1">
    <location>
        <position position="433"/>
    </location>
    <ligand>
        <name>Mg(2+)</name>
        <dbReference type="ChEBI" id="CHEBI:18420"/>
    </ligand>
</feature>
<feature type="binding site" evidence="1">
    <location>
        <position position="441"/>
    </location>
    <ligand>
        <name>substrate</name>
    </ligand>
</feature>
<feature type="binding site" evidence="1">
    <location>
        <position position="446"/>
    </location>
    <ligand>
        <name>substrate</name>
    </ligand>
</feature>
<feature type="binding site" evidence="1">
    <location>
        <position position="450"/>
    </location>
    <ligand>
        <name>substrate</name>
    </ligand>
</feature>
<feature type="binding site" evidence="1">
    <location>
        <position position="476"/>
    </location>
    <ligand>
        <name>Mg(2+)</name>
        <dbReference type="ChEBI" id="CHEBI:18420"/>
    </ligand>
</feature>
<feature type="site" description="Transition state stabilizer" evidence="3">
    <location>
        <position position="438"/>
    </location>
</feature>
<protein>
    <recommendedName>
        <fullName evidence="2">Probable diguanylate cyclase DgcQ</fullName>
        <shortName evidence="2">DGC</shortName>
        <ecNumber evidence="2">2.7.7.65</ecNumber>
    </recommendedName>
    <alternativeName>
        <fullName evidence="2">Cellulose synthesis regulatory protein</fullName>
    </alternativeName>
</protein>
<sequence>MPHETLLDNQGWFKKLARRFGPGHVVNTCFLIVMLFSTLLTWREVMILKDAYVASQRNHLGSVANVLDRQLQFNMDRLIFLRNGMHEALVAPLAFSALQSAVTQFEQRRVRHFWQLELDKRRTLPLYGVSDQFVARTTLLSRESRDLANELTATLELGYLARSSAMLTLETMYVSRSGFYLSTLPTAYGSDIVSRYYQYVTQPWFIEQSQRRNPQRGVRWFTSAQPYVADEQKKVTASLPLDHDNYWYGVLAMDIPVASLQQFLRDAAEKDIEGEYQLYDNHLRLLTDSAPEQQTENTLNDRERALLAREIEKDTLGGLRLGTHYVSWERLDHFDGVLLRVHTLREGIQGNFGSISIALTLLWGLFTAMLLISWGVIRHMVKNMFVLQNSPQWQAWHDPLTRLYNRGALFEKASRLAKRYREARQPFSVIQLDLDYFKSVNDRFGHQAGDRVLSHAAGLIGSTIRAHDIAGRVGGEEFCIVLPGATKAQALQIAERIRQRINDKEILVTKSTTLRISASMGISSAEEYGDYDFEQLQSLADKRLYYAKQSGRNRICASDATQEREKK</sequence>